<sequence>MSQKAIKGYINLIIPAAGATPAPPIGPALGQRKVNIAAFCKDFNDATQGMEKGIPLPTVITVYEDSSFSFKIKTPPASYFLKKYAKITKGSSATKKEAVVGKVTMDDCREIAKLKMPDLNTKNIEAATKIICGSAASMGLEVVGN</sequence>
<organism>
    <name type="scientific">Rickettsia conorii (strain ATCC VR-613 / Malish 7)</name>
    <dbReference type="NCBI Taxonomy" id="272944"/>
    <lineage>
        <taxon>Bacteria</taxon>
        <taxon>Pseudomonadati</taxon>
        <taxon>Pseudomonadota</taxon>
        <taxon>Alphaproteobacteria</taxon>
        <taxon>Rickettsiales</taxon>
        <taxon>Rickettsiaceae</taxon>
        <taxon>Rickettsieae</taxon>
        <taxon>Rickettsia</taxon>
        <taxon>spotted fever group</taxon>
    </lineage>
</organism>
<gene>
    <name evidence="1" type="primary">rplK</name>
    <name type="ordered locus">RC0177</name>
</gene>
<proteinExistence type="inferred from homology"/>
<comment type="function">
    <text evidence="1">Forms part of the ribosomal stalk which helps the ribosome interact with GTP-bound translation factors.</text>
</comment>
<comment type="subunit">
    <text evidence="1">Part of the ribosomal stalk of the 50S ribosomal subunit. Interacts with L10 and the large rRNA to form the base of the stalk. L10 forms an elongated spine to which L12 dimers bind in a sequential fashion forming a multimeric L10(L12)X complex.</text>
</comment>
<comment type="PTM">
    <text evidence="1">One or more lysine residues are methylated.</text>
</comment>
<comment type="similarity">
    <text evidence="1">Belongs to the universal ribosomal protein uL11 family.</text>
</comment>
<name>RL11_RICCN</name>
<protein>
    <recommendedName>
        <fullName evidence="1">Large ribosomal subunit protein uL11</fullName>
    </recommendedName>
    <alternativeName>
        <fullName evidence="2">50S ribosomal protein L11</fullName>
    </alternativeName>
</protein>
<accession>Q92J90</accession>
<keyword id="KW-0488">Methylation</keyword>
<keyword id="KW-0687">Ribonucleoprotein</keyword>
<keyword id="KW-0689">Ribosomal protein</keyword>
<keyword id="KW-0694">RNA-binding</keyword>
<keyword id="KW-0699">rRNA-binding</keyword>
<dbReference type="EMBL" id="AE006914">
    <property type="protein sequence ID" value="AAL02715.1"/>
    <property type="molecule type" value="Genomic_DNA"/>
</dbReference>
<dbReference type="PIR" id="A97722">
    <property type="entry name" value="A97722"/>
</dbReference>
<dbReference type="RefSeq" id="WP_004996639.1">
    <property type="nucleotide sequence ID" value="NC_003103.1"/>
</dbReference>
<dbReference type="SMR" id="Q92J90"/>
<dbReference type="GeneID" id="95361892"/>
<dbReference type="KEGG" id="rco:RC0177"/>
<dbReference type="HOGENOM" id="CLU_074237_2_0_5"/>
<dbReference type="Proteomes" id="UP000000816">
    <property type="component" value="Chromosome"/>
</dbReference>
<dbReference type="GO" id="GO:0022625">
    <property type="term" value="C:cytosolic large ribosomal subunit"/>
    <property type="evidence" value="ECO:0007669"/>
    <property type="project" value="TreeGrafter"/>
</dbReference>
<dbReference type="GO" id="GO:0070180">
    <property type="term" value="F:large ribosomal subunit rRNA binding"/>
    <property type="evidence" value="ECO:0007669"/>
    <property type="project" value="UniProtKB-UniRule"/>
</dbReference>
<dbReference type="GO" id="GO:0003735">
    <property type="term" value="F:structural constituent of ribosome"/>
    <property type="evidence" value="ECO:0007669"/>
    <property type="project" value="InterPro"/>
</dbReference>
<dbReference type="GO" id="GO:0006412">
    <property type="term" value="P:translation"/>
    <property type="evidence" value="ECO:0007669"/>
    <property type="project" value="UniProtKB-UniRule"/>
</dbReference>
<dbReference type="CDD" id="cd00349">
    <property type="entry name" value="Ribosomal_L11"/>
    <property type="match status" value="1"/>
</dbReference>
<dbReference type="FunFam" id="3.30.1550.10:FF:000005">
    <property type="entry name" value="50S ribosomal protein L11"/>
    <property type="match status" value="1"/>
</dbReference>
<dbReference type="Gene3D" id="1.10.10.250">
    <property type="entry name" value="Ribosomal protein L11, C-terminal domain"/>
    <property type="match status" value="1"/>
</dbReference>
<dbReference type="Gene3D" id="3.30.1550.10">
    <property type="entry name" value="Ribosomal protein L11/L12, N-terminal domain"/>
    <property type="match status" value="1"/>
</dbReference>
<dbReference type="HAMAP" id="MF_00736">
    <property type="entry name" value="Ribosomal_uL11"/>
    <property type="match status" value="1"/>
</dbReference>
<dbReference type="InterPro" id="IPR000911">
    <property type="entry name" value="Ribosomal_uL11"/>
</dbReference>
<dbReference type="InterPro" id="IPR006519">
    <property type="entry name" value="Ribosomal_uL11_bac-typ"/>
</dbReference>
<dbReference type="InterPro" id="IPR020783">
    <property type="entry name" value="Ribosomal_uL11_C"/>
</dbReference>
<dbReference type="InterPro" id="IPR036769">
    <property type="entry name" value="Ribosomal_uL11_C_sf"/>
</dbReference>
<dbReference type="InterPro" id="IPR020785">
    <property type="entry name" value="Ribosomal_uL11_CS"/>
</dbReference>
<dbReference type="InterPro" id="IPR020784">
    <property type="entry name" value="Ribosomal_uL11_N"/>
</dbReference>
<dbReference type="InterPro" id="IPR036796">
    <property type="entry name" value="Ribosomal_uL11_N_sf"/>
</dbReference>
<dbReference type="NCBIfam" id="TIGR01632">
    <property type="entry name" value="L11_bact"/>
    <property type="match status" value="1"/>
</dbReference>
<dbReference type="PANTHER" id="PTHR11661">
    <property type="entry name" value="60S RIBOSOMAL PROTEIN L12"/>
    <property type="match status" value="1"/>
</dbReference>
<dbReference type="PANTHER" id="PTHR11661:SF1">
    <property type="entry name" value="LARGE RIBOSOMAL SUBUNIT PROTEIN UL11M"/>
    <property type="match status" value="1"/>
</dbReference>
<dbReference type="Pfam" id="PF00298">
    <property type="entry name" value="Ribosomal_L11"/>
    <property type="match status" value="1"/>
</dbReference>
<dbReference type="Pfam" id="PF03946">
    <property type="entry name" value="Ribosomal_L11_N"/>
    <property type="match status" value="1"/>
</dbReference>
<dbReference type="SMART" id="SM00649">
    <property type="entry name" value="RL11"/>
    <property type="match status" value="1"/>
</dbReference>
<dbReference type="SUPFAM" id="SSF54747">
    <property type="entry name" value="Ribosomal L11/L12e N-terminal domain"/>
    <property type="match status" value="1"/>
</dbReference>
<dbReference type="SUPFAM" id="SSF46906">
    <property type="entry name" value="Ribosomal protein L11, C-terminal domain"/>
    <property type="match status" value="1"/>
</dbReference>
<dbReference type="PROSITE" id="PS00359">
    <property type="entry name" value="RIBOSOMAL_L11"/>
    <property type="match status" value="1"/>
</dbReference>
<reference key="1">
    <citation type="journal article" date="2001" name="Science">
        <title>Mechanisms of evolution in Rickettsia conorii and R. prowazekii.</title>
        <authorList>
            <person name="Ogata H."/>
            <person name="Audic S."/>
            <person name="Renesto-Audiffren P."/>
            <person name="Fournier P.-E."/>
            <person name="Barbe V."/>
            <person name="Samson D."/>
            <person name="Roux V."/>
            <person name="Cossart P."/>
            <person name="Weissenbach J."/>
            <person name="Claverie J.-M."/>
            <person name="Raoult D."/>
        </authorList>
    </citation>
    <scope>NUCLEOTIDE SEQUENCE [LARGE SCALE GENOMIC DNA]</scope>
    <source>
        <strain>ATCC VR-613 / Malish 7</strain>
    </source>
</reference>
<evidence type="ECO:0000255" key="1">
    <source>
        <dbReference type="HAMAP-Rule" id="MF_00736"/>
    </source>
</evidence>
<evidence type="ECO:0000305" key="2"/>
<feature type="chain" id="PRO_0000104351" description="Large ribosomal subunit protein uL11">
    <location>
        <begin position="1"/>
        <end position="145"/>
    </location>
</feature>